<sequence length="96" mass="11248">MQRRQLEERQRKAEIEAQKDAILRTILTPEARQRLTNVKLVRPELAEAIENQLIALAQSGRIQAQITDDELKQILAQLNSQTRKDYKITIKERGWK</sequence>
<organism>
    <name type="scientific">Sulfolobus acidocaldarius (strain ATCC 33909 / DSM 639 / JCM 8929 / NBRC 15157 / NCIMB 11770)</name>
    <dbReference type="NCBI Taxonomy" id="330779"/>
    <lineage>
        <taxon>Archaea</taxon>
        <taxon>Thermoproteota</taxon>
        <taxon>Thermoprotei</taxon>
        <taxon>Sulfolobales</taxon>
        <taxon>Sulfolobaceae</taxon>
        <taxon>Sulfolobus</taxon>
    </lineage>
</organism>
<keyword id="KW-0238">DNA-binding</keyword>
<keyword id="KW-1185">Reference proteome</keyword>
<accession>Q4J8U0</accession>
<proteinExistence type="inferred from homology"/>
<comment type="similarity">
    <text evidence="1">Belongs to the PDCD5 family.</text>
</comment>
<evidence type="ECO:0000255" key="1">
    <source>
        <dbReference type="HAMAP-Rule" id="MF_00026"/>
    </source>
</evidence>
<protein>
    <recommendedName>
        <fullName evidence="1">DNA-binding protein Saci_1468</fullName>
    </recommendedName>
</protein>
<reference key="1">
    <citation type="journal article" date="2005" name="J. Bacteriol.">
        <title>The genome of Sulfolobus acidocaldarius, a model organism of the Crenarchaeota.</title>
        <authorList>
            <person name="Chen L."/>
            <person name="Bruegger K."/>
            <person name="Skovgaard M."/>
            <person name="Redder P."/>
            <person name="She Q."/>
            <person name="Torarinsson E."/>
            <person name="Greve B."/>
            <person name="Awayez M."/>
            <person name="Zibat A."/>
            <person name="Klenk H.-P."/>
            <person name="Garrett R.A."/>
        </authorList>
    </citation>
    <scope>NUCLEOTIDE SEQUENCE [LARGE SCALE GENOMIC DNA]</scope>
    <source>
        <strain>ATCC 33909 / DSM 639 / JCM 8929 / NBRC 15157 / NCIMB 11770</strain>
    </source>
</reference>
<dbReference type="EMBL" id="CP000077">
    <property type="protein sequence ID" value="AAY80789.1"/>
    <property type="molecule type" value="Genomic_DNA"/>
</dbReference>
<dbReference type="SMR" id="Q4J8U0"/>
<dbReference type="STRING" id="330779.Saci_1468"/>
<dbReference type="KEGG" id="sai:Saci_1468"/>
<dbReference type="PATRIC" id="fig|330779.12.peg.1412"/>
<dbReference type="eggNOG" id="arCOG04179">
    <property type="taxonomic scope" value="Archaea"/>
</dbReference>
<dbReference type="HOGENOM" id="CLU_122978_3_0_2"/>
<dbReference type="Proteomes" id="UP000001018">
    <property type="component" value="Chromosome"/>
</dbReference>
<dbReference type="GO" id="GO:0005829">
    <property type="term" value="C:cytosol"/>
    <property type="evidence" value="ECO:0007669"/>
    <property type="project" value="TreeGrafter"/>
</dbReference>
<dbReference type="GO" id="GO:0003677">
    <property type="term" value="F:DNA binding"/>
    <property type="evidence" value="ECO:0007669"/>
    <property type="project" value="UniProtKB-UniRule"/>
</dbReference>
<dbReference type="FunFam" id="1.10.8.140:FF:000004">
    <property type="entry name" value="DNA-binding protein PAE3044"/>
    <property type="match status" value="1"/>
</dbReference>
<dbReference type="Gene3D" id="1.10.8.140">
    <property type="entry name" value="PDCD5-like"/>
    <property type="match status" value="1"/>
</dbReference>
<dbReference type="HAMAP" id="MF_00026">
    <property type="entry name" value="dsDNA_bind"/>
    <property type="match status" value="1"/>
</dbReference>
<dbReference type="InterPro" id="IPR022889">
    <property type="entry name" value="DNA_bind_arc"/>
</dbReference>
<dbReference type="InterPro" id="IPR002836">
    <property type="entry name" value="PDCD5-like"/>
</dbReference>
<dbReference type="InterPro" id="IPR036883">
    <property type="entry name" value="PDCD5-like_sf"/>
</dbReference>
<dbReference type="NCBIfam" id="NF003268">
    <property type="entry name" value="PRK04239.1"/>
    <property type="match status" value="1"/>
</dbReference>
<dbReference type="PANTHER" id="PTHR10840">
    <property type="entry name" value="PROGRAMMED CELL DEATH PROTEIN 5"/>
    <property type="match status" value="1"/>
</dbReference>
<dbReference type="PANTHER" id="PTHR10840:SF0">
    <property type="entry name" value="PROGRAMMED CELL DEATH PROTEIN 5"/>
    <property type="match status" value="1"/>
</dbReference>
<dbReference type="Pfam" id="PF01984">
    <property type="entry name" value="dsDNA_bind"/>
    <property type="match status" value="1"/>
</dbReference>
<dbReference type="PIRSF" id="PIRSF015730">
    <property type="entry name" value="TFAR19"/>
    <property type="match status" value="1"/>
</dbReference>
<dbReference type="SUPFAM" id="SSF46950">
    <property type="entry name" value="Double-stranded DNA-binding domain"/>
    <property type="match status" value="1"/>
</dbReference>
<feature type="chain" id="PRO_0000284569" description="DNA-binding protein Saci_1468">
    <location>
        <begin position="1"/>
        <end position="96"/>
    </location>
</feature>
<name>Y1468_SULAC</name>
<gene>
    <name type="ordered locus">Saci_1468</name>
</gene>